<name>RRF_CHLL3</name>
<feature type="chain" id="PRO_1000003219" description="Ribosome-recycling factor">
    <location>
        <begin position="1"/>
        <end position="186"/>
    </location>
</feature>
<keyword id="KW-0963">Cytoplasm</keyword>
<keyword id="KW-0648">Protein biosynthesis</keyword>
<keyword id="KW-1185">Reference proteome</keyword>
<comment type="function">
    <text evidence="1">Responsible for the release of ribosomes from messenger RNA at the termination of protein biosynthesis. May increase the efficiency of translation by recycling ribosomes from one round of translation to another.</text>
</comment>
<comment type="subcellular location">
    <subcellularLocation>
        <location evidence="1">Cytoplasm</location>
    </subcellularLocation>
</comment>
<comment type="similarity">
    <text evidence="1">Belongs to the RRF family.</text>
</comment>
<proteinExistence type="inferred from homology"/>
<accession>Q3B5Z5</accession>
<reference key="1">
    <citation type="submission" date="2005-08" db="EMBL/GenBank/DDBJ databases">
        <title>Complete sequence of Pelodictyon luteolum DSM 273.</title>
        <authorList>
            <consortium name="US DOE Joint Genome Institute"/>
            <person name="Copeland A."/>
            <person name="Lucas S."/>
            <person name="Lapidus A."/>
            <person name="Barry K."/>
            <person name="Detter J.C."/>
            <person name="Glavina T."/>
            <person name="Hammon N."/>
            <person name="Israni S."/>
            <person name="Pitluck S."/>
            <person name="Bryant D."/>
            <person name="Schmutz J."/>
            <person name="Larimer F."/>
            <person name="Land M."/>
            <person name="Kyrpides N."/>
            <person name="Ivanova N."/>
            <person name="Richardson P."/>
        </authorList>
    </citation>
    <scope>NUCLEOTIDE SEQUENCE [LARGE SCALE GENOMIC DNA]</scope>
    <source>
        <strain>DSM 273 / BCRC 81028 / 2530</strain>
    </source>
</reference>
<gene>
    <name evidence="1" type="primary">frr</name>
    <name type="ordered locus">Plut_0348</name>
</gene>
<sequence length="186" mass="21233">MNVKDVSQKSEQKMKKAIEAFQHEIASIRTGKATTALLDRVKVEAYGQTMPLRQVGNVGVSDIHTLLVQVWDKSMVAATEKAIRDANLGLNPAAEGQSIRVSIPPLTEERRKEFVKLTRKFGEDSKVSLRNHRRDMIQEIEKLEKEKAISEDDRNRGKKDADDLLHRFEKQVNELIAQKEKEIMEV</sequence>
<organism>
    <name type="scientific">Chlorobium luteolum (strain DSM 273 / BCRC 81028 / 2530)</name>
    <name type="common">Pelodictyon luteolum</name>
    <dbReference type="NCBI Taxonomy" id="319225"/>
    <lineage>
        <taxon>Bacteria</taxon>
        <taxon>Pseudomonadati</taxon>
        <taxon>Chlorobiota</taxon>
        <taxon>Chlorobiia</taxon>
        <taxon>Chlorobiales</taxon>
        <taxon>Chlorobiaceae</taxon>
        <taxon>Chlorobium/Pelodictyon group</taxon>
        <taxon>Pelodictyon</taxon>
    </lineage>
</organism>
<dbReference type="EMBL" id="CP000096">
    <property type="protein sequence ID" value="ABB23236.1"/>
    <property type="molecule type" value="Genomic_DNA"/>
</dbReference>
<dbReference type="RefSeq" id="WP_011357111.1">
    <property type="nucleotide sequence ID" value="NC_007512.1"/>
</dbReference>
<dbReference type="SMR" id="Q3B5Z5"/>
<dbReference type="STRING" id="319225.Plut_0348"/>
<dbReference type="KEGG" id="plt:Plut_0348"/>
<dbReference type="eggNOG" id="COG0233">
    <property type="taxonomic scope" value="Bacteria"/>
</dbReference>
<dbReference type="HOGENOM" id="CLU_073981_2_0_10"/>
<dbReference type="OrthoDB" id="9804006at2"/>
<dbReference type="Proteomes" id="UP000002709">
    <property type="component" value="Chromosome"/>
</dbReference>
<dbReference type="GO" id="GO:0005737">
    <property type="term" value="C:cytoplasm"/>
    <property type="evidence" value="ECO:0007669"/>
    <property type="project" value="UniProtKB-SubCell"/>
</dbReference>
<dbReference type="GO" id="GO:0043023">
    <property type="term" value="F:ribosomal large subunit binding"/>
    <property type="evidence" value="ECO:0007669"/>
    <property type="project" value="TreeGrafter"/>
</dbReference>
<dbReference type="GO" id="GO:0006415">
    <property type="term" value="P:translational termination"/>
    <property type="evidence" value="ECO:0007669"/>
    <property type="project" value="UniProtKB-UniRule"/>
</dbReference>
<dbReference type="CDD" id="cd00520">
    <property type="entry name" value="RRF"/>
    <property type="match status" value="1"/>
</dbReference>
<dbReference type="FunFam" id="1.10.132.20:FF:000001">
    <property type="entry name" value="Ribosome-recycling factor"/>
    <property type="match status" value="1"/>
</dbReference>
<dbReference type="FunFam" id="3.30.1360.40:FF:000001">
    <property type="entry name" value="Ribosome-recycling factor"/>
    <property type="match status" value="1"/>
</dbReference>
<dbReference type="Gene3D" id="3.30.1360.40">
    <property type="match status" value="1"/>
</dbReference>
<dbReference type="Gene3D" id="1.10.132.20">
    <property type="entry name" value="Ribosome-recycling factor"/>
    <property type="match status" value="1"/>
</dbReference>
<dbReference type="HAMAP" id="MF_00040">
    <property type="entry name" value="RRF"/>
    <property type="match status" value="1"/>
</dbReference>
<dbReference type="InterPro" id="IPR002661">
    <property type="entry name" value="Ribosome_recyc_fac"/>
</dbReference>
<dbReference type="InterPro" id="IPR023584">
    <property type="entry name" value="Ribosome_recyc_fac_dom"/>
</dbReference>
<dbReference type="InterPro" id="IPR036191">
    <property type="entry name" value="RRF_sf"/>
</dbReference>
<dbReference type="NCBIfam" id="TIGR00496">
    <property type="entry name" value="frr"/>
    <property type="match status" value="1"/>
</dbReference>
<dbReference type="PANTHER" id="PTHR20982:SF3">
    <property type="entry name" value="MITOCHONDRIAL RIBOSOME RECYCLING FACTOR PSEUDO 1"/>
    <property type="match status" value="1"/>
</dbReference>
<dbReference type="PANTHER" id="PTHR20982">
    <property type="entry name" value="RIBOSOME RECYCLING FACTOR"/>
    <property type="match status" value="1"/>
</dbReference>
<dbReference type="Pfam" id="PF01765">
    <property type="entry name" value="RRF"/>
    <property type="match status" value="1"/>
</dbReference>
<dbReference type="SUPFAM" id="SSF55194">
    <property type="entry name" value="Ribosome recycling factor, RRF"/>
    <property type="match status" value="1"/>
</dbReference>
<protein>
    <recommendedName>
        <fullName evidence="1">Ribosome-recycling factor</fullName>
        <shortName evidence="1">RRF</shortName>
    </recommendedName>
    <alternativeName>
        <fullName evidence="1">Ribosome-releasing factor</fullName>
    </alternativeName>
</protein>
<evidence type="ECO:0000255" key="1">
    <source>
        <dbReference type="HAMAP-Rule" id="MF_00040"/>
    </source>
</evidence>